<gene>
    <name evidence="1" type="primary">hldE</name>
    <name type="ordered locus">Shewmr7_0886</name>
</gene>
<sequence length="476" mass="50451">MKVSLPAFEKAKVLVVGDVMLDRYWVGPTGRISPEAPVPVVKINQVEDRPGGAANVALNIATLGGQVQLAGLVGEDDTAKALTLGVQALGVEPQWLKIADKPTITKLRVLSRNQQLIRLDFEESFDKQDSARLLKQSEALLDSVDVVVLSDYAKGAIDKPQDFIALARAKGVKVLVDPKGSDFSRYHGASLITPNMSEFEAVVGAVTSEADLLEKARGLLNKHQFDAILVTRSEKGMTLVTANAPELHIPTVAREVYDVTGAGDTVISALATSLAAGAELPQACAIANTAAGVVVGKLGTSTVSRIELIEALALHHGESGFGVVSEDQLAYALEQAKLRGERVVMTNGCFDILHAGHVSYLKQAKALGDRLIVAVNDDASVKRLKGEGRPVNQVDRRMAVLAGLAAVDWVVPFSEDTPQRIIARLLPDLLVKGGDYKIEDIAGGAEVIAAGGQVQVLGFEDGISTTAIIQNIMAKQ</sequence>
<protein>
    <recommendedName>
        <fullName evidence="1">Bifunctional protein HldE</fullName>
    </recommendedName>
    <domain>
        <recommendedName>
            <fullName evidence="1">D-beta-D-heptose 7-phosphate kinase</fullName>
            <ecNumber evidence="1">2.7.1.167</ecNumber>
        </recommendedName>
        <alternativeName>
            <fullName evidence="1">D-beta-D-heptose 7-phosphotransferase</fullName>
        </alternativeName>
        <alternativeName>
            <fullName evidence="1">D-glycero-beta-D-manno-heptose-7-phosphate kinase</fullName>
        </alternativeName>
    </domain>
    <domain>
        <recommendedName>
            <fullName evidence="1">D-beta-D-heptose 1-phosphate adenylyltransferase</fullName>
            <ecNumber evidence="1">2.7.7.70</ecNumber>
        </recommendedName>
        <alternativeName>
            <fullName evidence="1">D-glycero-beta-D-manno-heptose 1-phosphate adenylyltransferase</fullName>
        </alternativeName>
    </domain>
</protein>
<evidence type="ECO:0000255" key="1">
    <source>
        <dbReference type="HAMAP-Rule" id="MF_01603"/>
    </source>
</evidence>
<proteinExistence type="inferred from homology"/>
<dbReference type="EC" id="2.7.1.167" evidence="1"/>
<dbReference type="EC" id="2.7.7.70" evidence="1"/>
<dbReference type="EMBL" id="CP000444">
    <property type="protein sequence ID" value="ABI41885.1"/>
    <property type="molecule type" value="Genomic_DNA"/>
</dbReference>
<dbReference type="SMR" id="Q0HYC0"/>
<dbReference type="KEGG" id="shm:Shewmr7_0886"/>
<dbReference type="HOGENOM" id="CLU_021150_2_1_6"/>
<dbReference type="UniPathway" id="UPA00356">
    <property type="reaction ID" value="UER00437"/>
</dbReference>
<dbReference type="UniPathway" id="UPA00356">
    <property type="reaction ID" value="UER00439"/>
</dbReference>
<dbReference type="GO" id="GO:0005829">
    <property type="term" value="C:cytosol"/>
    <property type="evidence" value="ECO:0007669"/>
    <property type="project" value="TreeGrafter"/>
</dbReference>
<dbReference type="GO" id="GO:0005524">
    <property type="term" value="F:ATP binding"/>
    <property type="evidence" value="ECO:0007669"/>
    <property type="project" value="UniProtKB-UniRule"/>
</dbReference>
<dbReference type="GO" id="GO:0033785">
    <property type="term" value="F:heptose 7-phosphate kinase activity"/>
    <property type="evidence" value="ECO:0007669"/>
    <property type="project" value="UniProtKB-UniRule"/>
</dbReference>
<dbReference type="GO" id="GO:0033786">
    <property type="term" value="F:heptose-1-phosphate adenylyltransferase activity"/>
    <property type="evidence" value="ECO:0007669"/>
    <property type="project" value="UniProtKB-UniRule"/>
</dbReference>
<dbReference type="GO" id="GO:0016773">
    <property type="term" value="F:phosphotransferase activity, alcohol group as acceptor"/>
    <property type="evidence" value="ECO:0007669"/>
    <property type="project" value="InterPro"/>
</dbReference>
<dbReference type="GO" id="GO:0097171">
    <property type="term" value="P:ADP-L-glycero-beta-D-manno-heptose biosynthetic process"/>
    <property type="evidence" value="ECO:0007669"/>
    <property type="project" value="UniProtKB-UniPathway"/>
</dbReference>
<dbReference type="CDD" id="cd01172">
    <property type="entry name" value="RfaE_like"/>
    <property type="match status" value="1"/>
</dbReference>
<dbReference type="FunFam" id="3.40.1190.20:FF:000002">
    <property type="entry name" value="Bifunctional protein HldE"/>
    <property type="match status" value="1"/>
</dbReference>
<dbReference type="FunFam" id="3.40.50.620:FF:000028">
    <property type="entry name" value="Bifunctional protein HldE"/>
    <property type="match status" value="1"/>
</dbReference>
<dbReference type="Gene3D" id="3.40.1190.20">
    <property type="match status" value="1"/>
</dbReference>
<dbReference type="Gene3D" id="3.40.50.620">
    <property type="entry name" value="HUPs"/>
    <property type="match status" value="1"/>
</dbReference>
<dbReference type="HAMAP" id="MF_01603">
    <property type="entry name" value="HldE"/>
    <property type="match status" value="1"/>
</dbReference>
<dbReference type="InterPro" id="IPR023030">
    <property type="entry name" value="Bifunc_HldE"/>
</dbReference>
<dbReference type="InterPro" id="IPR002173">
    <property type="entry name" value="Carboh/pur_kinase_PfkB_CS"/>
</dbReference>
<dbReference type="InterPro" id="IPR004821">
    <property type="entry name" value="Cyt_trans-like"/>
</dbReference>
<dbReference type="InterPro" id="IPR011611">
    <property type="entry name" value="PfkB_dom"/>
</dbReference>
<dbReference type="InterPro" id="IPR011913">
    <property type="entry name" value="RfaE_dom_I"/>
</dbReference>
<dbReference type="InterPro" id="IPR011914">
    <property type="entry name" value="RfaE_dom_II"/>
</dbReference>
<dbReference type="InterPro" id="IPR029056">
    <property type="entry name" value="Ribokinase-like"/>
</dbReference>
<dbReference type="InterPro" id="IPR014729">
    <property type="entry name" value="Rossmann-like_a/b/a_fold"/>
</dbReference>
<dbReference type="NCBIfam" id="TIGR00125">
    <property type="entry name" value="cyt_tran_rel"/>
    <property type="match status" value="1"/>
</dbReference>
<dbReference type="NCBIfam" id="NF008454">
    <property type="entry name" value="PRK11316.1"/>
    <property type="match status" value="1"/>
</dbReference>
<dbReference type="NCBIfam" id="TIGR02198">
    <property type="entry name" value="rfaE_dom_I"/>
    <property type="match status" value="1"/>
</dbReference>
<dbReference type="NCBIfam" id="TIGR02199">
    <property type="entry name" value="rfaE_dom_II"/>
    <property type="match status" value="1"/>
</dbReference>
<dbReference type="PANTHER" id="PTHR46969">
    <property type="entry name" value="BIFUNCTIONAL PROTEIN HLDE"/>
    <property type="match status" value="1"/>
</dbReference>
<dbReference type="PANTHER" id="PTHR46969:SF1">
    <property type="entry name" value="BIFUNCTIONAL PROTEIN HLDE"/>
    <property type="match status" value="1"/>
</dbReference>
<dbReference type="Pfam" id="PF01467">
    <property type="entry name" value="CTP_transf_like"/>
    <property type="match status" value="1"/>
</dbReference>
<dbReference type="Pfam" id="PF00294">
    <property type="entry name" value="PfkB"/>
    <property type="match status" value="1"/>
</dbReference>
<dbReference type="SUPFAM" id="SSF52374">
    <property type="entry name" value="Nucleotidylyl transferase"/>
    <property type="match status" value="1"/>
</dbReference>
<dbReference type="SUPFAM" id="SSF53613">
    <property type="entry name" value="Ribokinase-like"/>
    <property type="match status" value="1"/>
</dbReference>
<dbReference type="PROSITE" id="PS00583">
    <property type="entry name" value="PFKB_KINASES_1"/>
    <property type="match status" value="1"/>
</dbReference>
<dbReference type="PROSITE" id="PS00584">
    <property type="entry name" value="PFKB_KINASES_2"/>
    <property type="match status" value="1"/>
</dbReference>
<name>HLDE_SHESR</name>
<feature type="chain" id="PRO_0000291692" description="Bifunctional protein HldE">
    <location>
        <begin position="1"/>
        <end position="476"/>
    </location>
</feature>
<feature type="region of interest" description="Ribokinase">
    <location>
        <begin position="1"/>
        <end position="319"/>
    </location>
</feature>
<feature type="region of interest" description="Cytidylyltransferase">
    <location>
        <begin position="345"/>
        <end position="476"/>
    </location>
</feature>
<feature type="active site" evidence="1">
    <location>
        <position position="264"/>
    </location>
</feature>
<feature type="binding site" evidence="1">
    <location>
        <begin position="195"/>
        <end position="198"/>
    </location>
    <ligand>
        <name>ATP</name>
        <dbReference type="ChEBI" id="CHEBI:30616"/>
    </ligand>
</feature>
<keyword id="KW-0067">ATP-binding</keyword>
<keyword id="KW-0119">Carbohydrate metabolism</keyword>
<keyword id="KW-0418">Kinase</keyword>
<keyword id="KW-0511">Multifunctional enzyme</keyword>
<keyword id="KW-0547">Nucleotide-binding</keyword>
<keyword id="KW-0548">Nucleotidyltransferase</keyword>
<keyword id="KW-0808">Transferase</keyword>
<comment type="function">
    <text evidence="1">Catalyzes the phosphorylation of D-glycero-D-manno-heptose 7-phosphate at the C-1 position to selectively form D-glycero-beta-D-manno-heptose-1,7-bisphosphate.</text>
</comment>
<comment type="function">
    <text evidence="1">Catalyzes the ADP transfer from ATP to D-glycero-beta-D-manno-heptose 1-phosphate, yielding ADP-D-glycero-beta-D-manno-heptose.</text>
</comment>
<comment type="catalytic activity">
    <reaction evidence="1">
        <text>D-glycero-beta-D-manno-heptose 7-phosphate + ATP = D-glycero-beta-D-manno-heptose 1,7-bisphosphate + ADP + H(+)</text>
        <dbReference type="Rhea" id="RHEA:27473"/>
        <dbReference type="ChEBI" id="CHEBI:15378"/>
        <dbReference type="ChEBI" id="CHEBI:30616"/>
        <dbReference type="ChEBI" id="CHEBI:60204"/>
        <dbReference type="ChEBI" id="CHEBI:60208"/>
        <dbReference type="ChEBI" id="CHEBI:456216"/>
        <dbReference type="EC" id="2.7.1.167"/>
    </reaction>
</comment>
<comment type="catalytic activity">
    <reaction evidence="1">
        <text>D-glycero-beta-D-manno-heptose 1-phosphate + ATP + H(+) = ADP-D-glycero-beta-D-manno-heptose + diphosphate</text>
        <dbReference type="Rhea" id="RHEA:27465"/>
        <dbReference type="ChEBI" id="CHEBI:15378"/>
        <dbReference type="ChEBI" id="CHEBI:30616"/>
        <dbReference type="ChEBI" id="CHEBI:33019"/>
        <dbReference type="ChEBI" id="CHEBI:59967"/>
        <dbReference type="ChEBI" id="CHEBI:61593"/>
        <dbReference type="EC" id="2.7.7.70"/>
    </reaction>
</comment>
<comment type="pathway">
    <text evidence="1">Nucleotide-sugar biosynthesis; ADP-L-glycero-beta-D-manno-heptose biosynthesis; ADP-L-glycero-beta-D-manno-heptose from D-glycero-beta-D-manno-heptose 7-phosphate: step 1/4.</text>
</comment>
<comment type="pathway">
    <text evidence="1">Nucleotide-sugar biosynthesis; ADP-L-glycero-beta-D-manno-heptose biosynthesis; ADP-L-glycero-beta-D-manno-heptose from D-glycero-beta-D-manno-heptose 7-phosphate: step 3/4.</text>
</comment>
<comment type="subunit">
    <text evidence="1">Homodimer.</text>
</comment>
<comment type="similarity">
    <text evidence="1">In the N-terminal section; belongs to the carbohydrate kinase PfkB family.</text>
</comment>
<comment type="similarity">
    <text evidence="1">In the C-terminal section; belongs to the cytidylyltransferase family.</text>
</comment>
<reference key="1">
    <citation type="submission" date="2006-08" db="EMBL/GenBank/DDBJ databases">
        <title>Complete sequence of chromosome 1 of Shewanella sp. MR-7.</title>
        <authorList>
            <person name="Copeland A."/>
            <person name="Lucas S."/>
            <person name="Lapidus A."/>
            <person name="Barry K."/>
            <person name="Detter J.C."/>
            <person name="Glavina del Rio T."/>
            <person name="Hammon N."/>
            <person name="Israni S."/>
            <person name="Dalin E."/>
            <person name="Tice H."/>
            <person name="Pitluck S."/>
            <person name="Kiss H."/>
            <person name="Brettin T."/>
            <person name="Bruce D."/>
            <person name="Han C."/>
            <person name="Tapia R."/>
            <person name="Gilna P."/>
            <person name="Schmutz J."/>
            <person name="Larimer F."/>
            <person name="Land M."/>
            <person name="Hauser L."/>
            <person name="Kyrpides N."/>
            <person name="Mikhailova N."/>
            <person name="Nealson K."/>
            <person name="Konstantinidis K."/>
            <person name="Klappenbach J."/>
            <person name="Tiedje J."/>
            <person name="Richardson P."/>
        </authorList>
    </citation>
    <scope>NUCLEOTIDE SEQUENCE [LARGE SCALE GENOMIC DNA]</scope>
    <source>
        <strain>MR-7</strain>
    </source>
</reference>
<organism>
    <name type="scientific">Shewanella sp. (strain MR-7)</name>
    <dbReference type="NCBI Taxonomy" id="60481"/>
    <lineage>
        <taxon>Bacteria</taxon>
        <taxon>Pseudomonadati</taxon>
        <taxon>Pseudomonadota</taxon>
        <taxon>Gammaproteobacteria</taxon>
        <taxon>Alteromonadales</taxon>
        <taxon>Shewanellaceae</taxon>
        <taxon>Shewanella</taxon>
    </lineage>
</organism>
<accession>Q0HYC0</accession>